<gene>
    <name evidence="1" type="primary">mtnA</name>
    <name type="ordered locus">Psyr_3648</name>
</gene>
<accession>Q4ZQ92</accession>
<keyword id="KW-0028">Amino-acid biosynthesis</keyword>
<keyword id="KW-0413">Isomerase</keyword>
<keyword id="KW-0486">Methionine biosynthesis</keyword>
<name>MTNA_PSEU2</name>
<proteinExistence type="inferred from homology"/>
<organism>
    <name type="scientific">Pseudomonas syringae pv. syringae (strain B728a)</name>
    <dbReference type="NCBI Taxonomy" id="205918"/>
    <lineage>
        <taxon>Bacteria</taxon>
        <taxon>Pseudomonadati</taxon>
        <taxon>Pseudomonadota</taxon>
        <taxon>Gammaproteobacteria</taxon>
        <taxon>Pseudomonadales</taxon>
        <taxon>Pseudomonadaceae</taxon>
        <taxon>Pseudomonas</taxon>
        <taxon>Pseudomonas syringae</taxon>
    </lineage>
</organism>
<sequence>MRDRLLAAEKVKAIDWRDDALYLLDQRVLPFEEVWHRYTTAEGVAEAIRTMVVRGAPAIGISAAYGAVLAARARIAQGADWYPALEEDMQLLADSRPTAVNLFWALNRMRDRLMRVKDGDDPLAALEAEAVAIHLSDREANLTMAQLGADLIRKHQGNLQTVLTHCNTGALATGGFGTALGVIRAAHLEGMIERVYADETRPWLQGSRLTAWELANEGIPVTLNADSAAAHLMRTKGITWVIVGADRITANGDVANKIGTYQLAVAAMHHGVRFMVVAPSSTIDMEMASGDDIVIEERDGRELLEVGGQRVGAEVEAFNPVFDVTPADLIDAIVTEKGIVERPDTARMAQLMSRKHLH</sequence>
<dbReference type="EC" id="5.3.1.23" evidence="1"/>
<dbReference type="EMBL" id="CP000075">
    <property type="protein sequence ID" value="AAY38680.1"/>
    <property type="status" value="ALT_INIT"/>
    <property type="molecule type" value="Genomic_DNA"/>
</dbReference>
<dbReference type="RefSeq" id="WP_003404235.1">
    <property type="nucleotide sequence ID" value="NC_007005.1"/>
</dbReference>
<dbReference type="RefSeq" id="YP_236718.1">
    <property type="nucleotide sequence ID" value="NC_007005.1"/>
</dbReference>
<dbReference type="SMR" id="Q4ZQ92"/>
<dbReference type="STRING" id="205918.Psyr_3648"/>
<dbReference type="KEGG" id="psb:Psyr_3648"/>
<dbReference type="PATRIC" id="fig|205918.7.peg.3746"/>
<dbReference type="eggNOG" id="COG0182">
    <property type="taxonomic scope" value="Bacteria"/>
</dbReference>
<dbReference type="HOGENOM" id="CLU_016218_1_2_6"/>
<dbReference type="OrthoDB" id="9803436at2"/>
<dbReference type="UniPathway" id="UPA00904">
    <property type="reaction ID" value="UER00874"/>
</dbReference>
<dbReference type="Proteomes" id="UP000000426">
    <property type="component" value="Chromosome"/>
</dbReference>
<dbReference type="GO" id="GO:0046523">
    <property type="term" value="F:S-methyl-5-thioribose-1-phosphate isomerase activity"/>
    <property type="evidence" value="ECO:0007669"/>
    <property type="project" value="UniProtKB-UniRule"/>
</dbReference>
<dbReference type="GO" id="GO:0019509">
    <property type="term" value="P:L-methionine salvage from methylthioadenosine"/>
    <property type="evidence" value="ECO:0007669"/>
    <property type="project" value="UniProtKB-UniRule"/>
</dbReference>
<dbReference type="FunFam" id="1.20.120.420:FF:000008">
    <property type="entry name" value="Methylthioribose-1-phosphate isomerase"/>
    <property type="match status" value="1"/>
</dbReference>
<dbReference type="FunFam" id="3.40.50.10470:FF:000006">
    <property type="entry name" value="Methylthioribose-1-phosphate isomerase"/>
    <property type="match status" value="1"/>
</dbReference>
<dbReference type="Gene3D" id="1.20.120.420">
    <property type="entry name" value="translation initiation factor eif-2b, domain 1"/>
    <property type="match status" value="1"/>
</dbReference>
<dbReference type="Gene3D" id="3.40.50.10470">
    <property type="entry name" value="Translation initiation factor eif-2b, domain 2"/>
    <property type="match status" value="1"/>
</dbReference>
<dbReference type="HAMAP" id="MF_01678">
    <property type="entry name" value="Salvage_MtnA"/>
    <property type="match status" value="1"/>
</dbReference>
<dbReference type="InterPro" id="IPR000649">
    <property type="entry name" value="IF-2B-related"/>
</dbReference>
<dbReference type="InterPro" id="IPR005251">
    <property type="entry name" value="IF-M1Pi"/>
</dbReference>
<dbReference type="InterPro" id="IPR042529">
    <property type="entry name" value="IF_2B-like_C"/>
</dbReference>
<dbReference type="InterPro" id="IPR011559">
    <property type="entry name" value="Initiation_fac_2B_a/b/d"/>
</dbReference>
<dbReference type="InterPro" id="IPR027363">
    <property type="entry name" value="M1Pi_N"/>
</dbReference>
<dbReference type="InterPro" id="IPR037171">
    <property type="entry name" value="NagB/RpiA_transferase-like"/>
</dbReference>
<dbReference type="NCBIfam" id="TIGR00524">
    <property type="entry name" value="eIF-2B_rel"/>
    <property type="match status" value="1"/>
</dbReference>
<dbReference type="NCBIfam" id="NF004326">
    <property type="entry name" value="PRK05720.1"/>
    <property type="match status" value="1"/>
</dbReference>
<dbReference type="NCBIfam" id="TIGR00512">
    <property type="entry name" value="salvage_mtnA"/>
    <property type="match status" value="1"/>
</dbReference>
<dbReference type="PANTHER" id="PTHR43475">
    <property type="entry name" value="METHYLTHIORIBOSE-1-PHOSPHATE ISOMERASE"/>
    <property type="match status" value="1"/>
</dbReference>
<dbReference type="PANTHER" id="PTHR43475:SF1">
    <property type="entry name" value="METHYLTHIORIBOSE-1-PHOSPHATE ISOMERASE"/>
    <property type="match status" value="1"/>
</dbReference>
<dbReference type="Pfam" id="PF01008">
    <property type="entry name" value="IF-2B"/>
    <property type="match status" value="1"/>
</dbReference>
<dbReference type="SUPFAM" id="SSF100950">
    <property type="entry name" value="NagB/RpiA/CoA transferase-like"/>
    <property type="match status" value="1"/>
</dbReference>
<reference key="1">
    <citation type="journal article" date="2005" name="Proc. Natl. Acad. Sci. U.S.A.">
        <title>Comparison of the complete genome sequences of Pseudomonas syringae pv. syringae B728a and pv. tomato DC3000.</title>
        <authorList>
            <person name="Feil H."/>
            <person name="Feil W.S."/>
            <person name="Chain P."/>
            <person name="Larimer F."/>
            <person name="Dibartolo G."/>
            <person name="Copeland A."/>
            <person name="Lykidis A."/>
            <person name="Trong S."/>
            <person name="Nolan M."/>
            <person name="Goltsman E."/>
            <person name="Thiel J."/>
            <person name="Malfatti S."/>
            <person name="Loper J.E."/>
            <person name="Lapidus A."/>
            <person name="Detter J.C."/>
            <person name="Land M."/>
            <person name="Richardson P.M."/>
            <person name="Kyrpides N.C."/>
            <person name="Ivanova N."/>
            <person name="Lindow S.E."/>
        </authorList>
    </citation>
    <scope>NUCLEOTIDE SEQUENCE [LARGE SCALE GENOMIC DNA]</scope>
    <source>
        <strain>B728a</strain>
    </source>
</reference>
<evidence type="ECO:0000255" key="1">
    <source>
        <dbReference type="HAMAP-Rule" id="MF_01678"/>
    </source>
</evidence>
<evidence type="ECO:0000305" key="2"/>
<protein>
    <recommendedName>
        <fullName evidence="1">Methylthioribose-1-phosphate isomerase</fullName>
        <shortName evidence="1">M1Pi</shortName>
        <shortName evidence="1">MTR-1-P isomerase</shortName>
        <ecNumber evidence="1">5.3.1.23</ecNumber>
    </recommendedName>
    <alternativeName>
        <fullName evidence="1">S-methyl-5-thioribose-1-phosphate isomerase</fullName>
    </alternativeName>
</protein>
<feature type="chain" id="PRO_0000357231" description="Methylthioribose-1-phosphate isomerase">
    <location>
        <begin position="1"/>
        <end position="358"/>
    </location>
</feature>
<feature type="active site" description="Proton donor" evidence="1">
    <location>
        <position position="246"/>
    </location>
</feature>
<feature type="binding site" evidence="1">
    <location>
        <begin position="54"/>
        <end position="56"/>
    </location>
    <ligand>
        <name>substrate</name>
    </ligand>
</feature>
<feature type="binding site" evidence="1">
    <location>
        <position position="96"/>
    </location>
    <ligand>
        <name>substrate</name>
    </ligand>
</feature>
<feature type="binding site" evidence="1">
    <location>
        <position position="205"/>
    </location>
    <ligand>
        <name>substrate</name>
    </ligand>
</feature>
<feature type="binding site" evidence="1">
    <location>
        <begin position="256"/>
        <end position="257"/>
    </location>
    <ligand>
        <name>substrate</name>
    </ligand>
</feature>
<feature type="site" description="Transition state stabilizer" evidence="1">
    <location>
        <position position="166"/>
    </location>
</feature>
<comment type="function">
    <text evidence="1">Catalyzes the interconversion of methylthioribose-1-phosphate (MTR-1-P) into methylthioribulose-1-phosphate (MTRu-1-P).</text>
</comment>
<comment type="catalytic activity">
    <reaction evidence="1">
        <text>5-(methylsulfanyl)-alpha-D-ribose 1-phosphate = 5-(methylsulfanyl)-D-ribulose 1-phosphate</text>
        <dbReference type="Rhea" id="RHEA:19989"/>
        <dbReference type="ChEBI" id="CHEBI:58533"/>
        <dbReference type="ChEBI" id="CHEBI:58548"/>
        <dbReference type="EC" id="5.3.1.23"/>
    </reaction>
</comment>
<comment type="pathway">
    <text evidence="1">Amino-acid biosynthesis; L-methionine biosynthesis via salvage pathway; L-methionine from S-methyl-5-thio-alpha-D-ribose 1-phosphate: step 1/6.</text>
</comment>
<comment type="similarity">
    <text evidence="2">Belongs to the eIF-2B alpha/beta/delta subunits family. MtnA subfamily.</text>
</comment>
<comment type="sequence caution" evidence="2">
    <conflict type="erroneous initiation">
        <sequence resource="EMBL-CDS" id="AAY38680"/>
    </conflict>
</comment>